<dbReference type="EC" id="7.1.1.-" evidence="1"/>
<dbReference type="EMBL" id="AF383857">
    <property type="protein sequence ID" value="AAN61798.1"/>
    <property type="molecule type" value="Genomic_DNA"/>
</dbReference>
<dbReference type="SMR" id="Q8HVK6"/>
<dbReference type="GO" id="GO:0009535">
    <property type="term" value="C:chloroplast thylakoid membrane"/>
    <property type="evidence" value="ECO:0007669"/>
    <property type="project" value="UniProtKB-SubCell"/>
</dbReference>
<dbReference type="GO" id="GO:0051539">
    <property type="term" value="F:4 iron, 4 sulfur cluster binding"/>
    <property type="evidence" value="ECO:0007669"/>
    <property type="project" value="UniProtKB-KW"/>
</dbReference>
<dbReference type="GO" id="GO:0005506">
    <property type="term" value="F:iron ion binding"/>
    <property type="evidence" value="ECO:0007669"/>
    <property type="project" value="UniProtKB-UniRule"/>
</dbReference>
<dbReference type="GO" id="GO:0008137">
    <property type="term" value="F:NADH dehydrogenase (ubiquinone) activity"/>
    <property type="evidence" value="ECO:0007669"/>
    <property type="project" value="InterPro"/>
</dbReference>
<dbReference type="GO" id="GO:0048038">
    <property type="term" value="F:quinone binding"/>
    <property type="evidence" value="ECO:0007669"/>
    <property type="project" value="UniProtKB-KW"/>
</dbReference>
<dbReference type="GO" id="GO:0019684">
    <property type="term" value="P:photosynthesis, light reaction"/>
    <property type="evidence" value="ECO:0007669"/>
    <property type="project" value="UniProtKB-UniRule"/>
</dbReference>
<dbReference type="FunFam" id="3.30.70.3270:FF:000006">
    <property type="entry name" value="NAD(P)H-quinone oxidoreductase subunit I, chloroplastic"/>
    <property type="match status" value="1"/>
</dbReference>
<dbReference type="Gene3D" id="3.30.70.3270">
    <property type="match status" value="1"/>
</dbReference>
<dbReference type="HAMAP" id="MF_01351">
    <property type="entry name" value="NDH1_NuoI"/>
    <property type="match status" value="1"/>
</dbReference>
<dbReference type="InterPro" id="IPR017896">
    <property type="entry name" value="4Fe4S_Fe-S-bd"/>
</dbReference>
<dbReference type="InterPro" id="IPR017900">
    <property type="entry name" value="4Fe4S_Fe_S_CS"/>
</dbReference>
<dbReference type="InterPro" id="IPR010226">
    <property type="entry name" value="NADH_quinone_OxRdtase_chainI"/>
</dbReference>
<dbReference type="InterPro" id="IPR004497">
    <property type="entry name" value="NDHI"/>
</dbReference>
<dbReference type="NCBIfam" id="TIGR00403">
    <property type="entry name" value="ndhI"/>
    <property type="match status" value="1"/>
</dbReference>
<dbReference type="NCBIfam" id="TIGR01971">
    <property type="entry name" value="NuoI"/>
    <property type="match status" value="1"/>
</dbReference>
<dbReference type="NCBIfam" id="NF004537">
    <property type="entry name" value="PRK05888.1-3"/>
    <property type="match status" value="1"/>
</dbReference>
<dbReference type="PANTHER" id="PTHR47275">
    <property type="entry name" value="NAD(P)H-QUINONE OXIDOREDUCTASE SUBUNIT I, CHLOROPLASTIC"/>
    <property type="match status" value="1"/>
</dbReference>
<dbReference type="PANTHER" id="PTHR47275:SF1">
    <property type="entry name" value="NAD(P)H-QUINONE OXIDOREDUCTASE SUBUNIT I, CHLOROPLASTIC"/>
    <property type="match status" value="1"/>
</dbReference>
<dbReference type="Pfam" id="PF00037">
    <property type="entry name" value="Fer4"/>
    <property type="match status" value="2"/>
</dbReference>
<dbReference type="SUPFAM" id="SSF54862">
    <property type="entry name" value="4Fe-4S ferredoxins"/>
    <property type="match status" value="1"/>
</dbReference>
<dbReference type="PROSITE" id="PS00198">
    <property type="entry name" value="4FE4S_FER_1"/>
    <property type="match status" value="2"/>
</dbReference>
<dbReference type="PROSITE" id="PS51379">
    <property type="entry name" value="4FE4S_FER_2"/>
    <property type="match status" value="2"/>
</dbReference>
<feature type="chain" id="PRO_0000250855" description="NAD(P)H-quinone oxidoreductase subunit I, chloroplastic">
    <location>
        <begin position="1"/>
        <end position="166"/>
    </location>
</feature>
<feature type="domain" description="4Fe-4S ferredoxin-type 1" evidence="1">
    <location>
        <begin position="55"/>
        <end position="84"/>
    </location>
</feature>
<feature type="domain" description="4Fe-4S ferredoxin-type 2" evidence="1">
    <location>
        <begin position="95"/>
        <end position="124"/>
    </location>
</feature>
<feature type="binding site" evidence="1">
    <location>
        <position position="64"/>
    </location>
    <ligand>
        <name>[4Fe-4S] cluster</name>
        <dbReference type="ChEBI" id="CHEBI:49883"/>
        <label>1</label>
    </ligand>
</feature>
<feature type="binding site" evidence="1">
    <location>
        <position position="67"/>
    </location>
    <ligand>
        <name>[4Fe-4S] cluster</name>
        <dbReference type="ChEBI" id="CHEBI:49883"/>
        <label>1</label>
    </ligand>
</feature>
<feature type="binding site" evidence="1">
    <location>
        <position position="70"/>
    </location>
    <ligand>
        <name>[4Fe-4S] cluster</name>
        <dbReference type="ChEBI" id="CHEBI:49883"/>
        <label>1</label>
    </ligand>
</feature>
<feature type="binding site" evidence="1">
    <location>
        <position position="74"/>
    </location>
    <ligand>
        <name>[4Fe-4S] cluster</name>
        <dbReference type="ChEBI" id="CHEBI:49883"/>
        <label>2</label>
    </ligand>
</feature>
<feature type="binding site" evidence="1">
    <location>
        <position position="104"/>
    </location>
    <ligand>
        <name>[4Fe-4S] cluster</name>
        <dbReference type="ChEBI" id="CHEBI:49883"/>
        <label>2</label>
    </ligand>
</feature>
<feature type="binding site" evidence="1">
    <location>
        <position position="107"/>
    </location>
    <ligand>
        <name>[4Fe-4S] cluster</name>
        <dbReference type="ChEBI" id="CHEBI:49883"/>
        <label>2</label>
    </ligand>
</feature>
<feature type="binding site" evidence="1">
    <location>
        <position position="110"/>
    </location>
    <ligand>
        <name>[4Fe-4S] cluster</name>
        <dbReference type="ChEBI" id="CHEBI:49883"/>
        <label>2</label>
    </ligand>
</feature>
<feature type="binding site" evidence="1">
    <location>
        <position position="114"/>
    </location>
    <ligand>
        <name>[4Fe-4S] cluster</name>
        <dbReference type="ChEBI" id="CHEBI:49883"/>
        <label>1</label>
    </ligand>
</feature>
<comment type="function">
    <text evidence="1">NDH shuttles electrons from NAD(P)H:plastoquinone, via FMN and iron-sulfur (Fe-S) centers, to quinones in the photosynthetic chain and possibly in a chloroplast respiratory chain. The immediate electron acceptor for the enzyme in this species is believed to be plastoquinone. Couples the redox reaction to proton translocation, and thus conserves the redox energy in a proton gradient.</text>
</comment>
<comment type="catalytic activity">
    <reaction evidence="1">
        <text>a plastoquinone + NADH + (n+1) H(+)(in) = a plastoquinol + NAD(+) + n H(+)(out)</text>
        <dbReference type="Rhea" id="RHEA:42608"/>
        <dbReference type="Rhea" id="RHEA-COMP:9561"/>
        <dbReference type="Rhea" id="RHEA-COMP:9562"/>
        <dbReference type="ChEBI" id="CHEBI:15378"/>
        <dbReference type="ChEBI" id="CHEBI:17757"/>
        <dbReference type="ChEBI" id="CHEBI:57540"/>
        <dbReference type="ChEBI" id="CHEBI:57945"/>
        <dbReference type="ChEBI" id="CHEBI:62192"/>
    </reaction>
</comment>
<comment type="catalytic activity">
    <reaction evidence="1">
        <text>a plastoquinone + NADPH + (n+1) H(+)(in) = a plastoquinol + NADP(+) + n H(+)(out)</text>
        <dbReference type="Rhea" id="RHEA:42612"/>
        <dbReference type="Rhea" id="RHEA-COMP:9561"/>
        <dbReference type="Rhea" id="RHEA-COMP:9562"/>
        <dbReference type="ChEBI" id="CHEBI:15378"/>
        <dbReference type="ChEBI" id="CHEBI:17757"/>
        <dbReference type="ChEBI" id="CHEBI:57783"/>
        <dbReference type="ChEBI" id="CHEBI:58349"/>
        <dbReference type="ChEBI" id="CHEBI:62192"/>
    </reaction>
</comment>
<comment type="cofactor">
    <cofactor evidence="1">
        <name>[4Fe-4S] cluster</name>
        <dbReference type="ChEBI" id="CHEBI:49883"/>
    </cofactor>
    <text evidence="1">Binds 2 [4Fe-4S] clusters per subunit.</text>
</comment>
<comment type="subunit">
    <text evidence="1">NDH is composed of at least 16 different subunits, 5 of which are encoded in the nucleus.</text>
</comment>
<comment type="subcellular location">
    <subcellularLocation>
        <location evidence="1">Plastid</location>
        <location evidence="1">Chloroplast thylakoid membrane</location>
        <topology evidence="1">Peripheral membrane protein</topology>
    </subcellularLocation>
</comment>
<comment type="similarity">
    <text evidence="1">Belongs to the complex I 23 kDa subunit family.</text>
</comment>
<proteinExistence type="inferred from homology"/>
<accession>Q8HVK6</accession>
<keyword id="KW-0004">4Fe-4S</keyword>
<keyword id="KW-0150">Chloroplast</keyword>
<keyword id="KW-0408">Iron</keyword>
<keyword id="KW-0411">Iron-sulfur</keyword>
<keyword id="KW-0472">Membrane</keyword>
<keyword id="KW-0479">Metal-binding</keyword>
<keyword id="KW-0520">NAD</keyword>
<keyword id="KW-0521">NADP</keyword>
<keyword id="KW-0934">Plastid</keyword>
<keyword id="KW-0618">Plastoquinone</keyword>
<keyword id="KW-0874">Quinone</keyword>
<keyword id="KW-0677">Repeat</keyword>
<keyword id="KW-0793">Thylakoid</keyword>
<keyword id="KW-1278">Translocase</keyword>
<gene>
    <name evidence="1" type="primary">ndhI</name>
</gene>
<sequence>MFPMVTEFMNYGQQTVRAARYIGQGFMITLSHANRLPVTIQYPYEKLITSERFRGRIHFEFDKCIACEVCVRVCPIDLPVVDWKLETDIRKKRLLNYSIDFGICIFCGNCVEYCPTNCLSMTEEYELSTYDRHELNYNQIALGRLPMSIIDDYTIRTILNLPEIKN</sequence>
<evidence type="ECO:0000255" key="1">
    <source>
        <dbReference type="HAMAP-Rule" id="MF_01351"/>
    </source>
</evidence>
<reference key="1">
    <citation type="submission" date="2003-01" db="EMBL/GenBank/DDBJ databases">
        <title>Chloroplast DNA phylogeny of tribe Heliantheae (Asteraceae).</title>
        <authorList>
            <person name="Panero J.L."/>
            <person name="Baldwin B.G."/>
            <person name="Schilling E.E."/>
            <person name="Clevinger J.A."/>
        </authorList>
    </citation>
    <scope>NUCLEOTIDE SEQUENCE [GENOMIC DNA]</scope>
</reference>
<name>NDHI_SYNNO</name>
<geneLocation type="chloroplast"/>
<organism>
    <name type="scientific">Synedrella nodiflora</name>
    <name type="common">Cinderella weed</name>
    <dbReference type="NCBI Taxonomy" id="183085"/>
    <lineage>
        <taxon>Eukaryota</taxon>
        <taxon>Viridiplantae</taxon>
        <taxon>Streptophyta</taxon>
        <taxon>Embryophyta</taxon>
        <taxon>Tracheophyta</taxon>
        <taxon>Spermatophyta</taxon>
        <taxon>Magnoliopsida</taxon>
        <taxon>eudicotyledons</taxon>
        <taxon>Gunneridae</taxon>
        <taxon>Pentapetalae</taxon>
        <taxon>asterids</taxon>
        <taxon>campanulids</taxon>
        <taxon>Asterales</taxon>
        <taxon>Asteraceae</taxon>
        <taxon>Asteroideae</taxon>
        <taxon>Heliantheae alliance</taxon>
        <taxon>Heliantheae</taxon>
        <taxon>Synedrella</taxon>
    </lineage>
</organism>
<protein>
    <recommendedName>
        <fullName evidence="1">NAD(P)H-quinone oxidoreductase subunit I, chloroplastic</fullName>
        <ecNumber evidence="1">7.1.1.-</ecNumber>
    </recommendedName>
    <alternativeName>
        <fullName evidence="1">NAD(P)H dehydrogenase subunit I</fullName>
        <shortName evidence="1">NDH subunit I</shortName>
    </alternativeName>
    <alternativeName>
        <fullName evidence="1">NADH-plastoquinone oxidoreductase subunit I</fullName>
    </alternativeName>
</protein>